<keyword id="KW-0002">3D-structure</keyword>
<keyword id="KW-0025">Alternative splicing</keyword>
<keyword id="KW-0036">Amyotrophic lateral sclerosis</keyword>
<keyword id="KW-0963">Cytoplasm</keyword>
<keyword id="KW-1017">Isopeptide bond</keyword>
<keyword id="KW-0488">Methylation</keyword>
<keyword id="KW-0523">Neurodegeneration</keyword>
<keyword id="KW-0908">Parkinsonism</keyword>
<keyword id="KW-0597">Phosphoprotein</keyword>
<keyword id="KW-1267">Proteomics identification</keyword>
<keyword id="KW-1185">Reference proteome</keyword>
<keyword id="KW-0950">Spinocerebellar ataxia</keyword>
<keyword id="KW-0818">Triplet repeat expansion</keyword>
<keyword id="KW-0832">Ubl conjugation</keyword>
<evidence type="ECO:0000250" key="1"/>
<evidence type="ECO:0000250" key="2">
    <source>
        <dbReference type="UniProtKB" id="O70305"/>
    </source>
</evidence>
<evidence type="ECO:0000255" key="3">
    <source>
        <dbReference type="PROSITE-ProRule" id="PRU01346"/>
    </source>
</evidence>
<evidence type="ECO:0000256" key="4">
    <source>
        <dbReference type="SAM" id="MobiDB-lite"/>
    </source>
</evidence>
<evidence type="ECO:0000269" key="5">
    <source>
    </source>
</evidence>
<evidence type="ECO:0000269" key="6">
    <source>
    </source>
</evidence>
<evidence type="ECO:0000269" key="7">
    <source>
    </source>
</evidence>
<evidence type="ECO:0000269" key="8">
    <source>
    </source>
</evidence>
<evidence type="ECO:0000269" key="9">
    <source>
    </source>
</evidence>
<evidence type="ECO:0000269" key="10">
    <source>
    </source>
</evidence>
<evidence type="ECO:0000269" key="11">
    <source>
    </source>
</evidence>
<evidence type="ECO:0000269" key="12">
    <source>
    </source>
</evidence>
<evidence type="ECO:0000269" key="13">
    <source>
    </source>
</evidence>
<evidence type="ECO:0000303" key="14">
    <source>
    </source>
</evidence>
<evidence type="ECO:0000303" key="15">
    <source>
    </source>
</evidence>
<evidence type="ECO:0000303" key="16">
    <source>
    </source>
</evidence>
<evidence type="ECO:0000305" key="17"/>
<evidence type="ECO:0007744" key="18">
    <source>
    </source>
</evidence>
<evidence type="ECO:0007744" key="19">
    <source>
    </source>
</evidence>
<evidence type="ECO:0007744" key="20">
    <source>
    </source>
</evidence>
<evidence type="ECO:0007744" key="21">
    <source>
    </source>
</evidence>
<evidence type="ECO:0007744" key="22">
    <source>
    </source>
</evidence>
<evidence type="ECO:0007744" key="23">
    <source>
    </source>
</evidence>
<evidence type="ECO:0007744" key="24">
    <source>
    </source>
</evidence>
<evidence type="ECO:0007744" key="25">
    <source>
    </source>
</evidence>
<evidence type="ECO:0007744" key="26">
    <source>
    </source>
</evidence>
<accession>Q99700</accession>
<accession>A6NLD4</accession>
<accession>Q24JQ7</accession>
<accession>Q6ZQZ7</accession>
<accession>Q99493</accession>
<comment type="function">
    <text evidence="7">Involved in EGFR trafficking, acting as negative regulator of endocytic EGFR internalization at the plasma membrane.</text>
</comment>
<comment type="subunit">
    <text evidence="2 5 6 7 8 9">Monomer (By similarity). Can also form homodimers (By similarity). Interacts with TARDBP; the interaction is RNA-dependent (PubMed:20740007). Interacts with RBFOX1 (PubMed:10814712). Interacts with polyribosomes (PubMed:16835262). Interacts with SH3GL2 and SH3GL3 (PubMed:18602463). Interacts with SH3KBP1 and CBL (By similarity). Interacts with EGFR (PubMed:18602463). Interacts with ATXN2L (PubMed:23209657).</text>
</comment>
<comment type="interaction">
    <interactant intactId="EBI-697691">
        <id>Q99700</id>
    </interactant>
    <interactant intactId="EBI-930964">
        <id>P54253</id>
        <label>ATXN1</label>
    </interactant>
    <organismsDiffer>false</organismsDiffer>
    <experiments>4</experiments>
</comment>
<comment type="interaction">
    <interactant intactId="EBI-697691">
        <id>Q99700</id>
    </interactant>
    <interactant intactId="EBI-351257">
        <id>P26196</id>
        <label>DDX6</label>
    </interactant>
    <organismsDiffer>false</organismsDiffer>
    <experiments>14</experiments>
</comment>
<comment type="interaction">
    <interactant intactId="EBI-697691">
        <id>Q99700</id>
    </interactant>
    <interactant intactId="EBI-1047359">
        <id>Q13283</id>
        <label>G3BP1</label>
    </interactant>
    <organismsDiffer>false</organismsDiffer>
    <experiments>4</experiments>
</comment>
<comment type="interaction">
    <interactant intactId="EBI-697691">
        <id>Q99700</id>
    </interactant>
    <interactant intactId="EBI-81531">
        <id>P11940</id>
        <label>PABPC1</label>
    </interactant>
    <organismsDiffer>false</organismsDiffer>
    <experiments>8</experiments>
</comment>
<comment type="interaction">
    <interactant intactId="EBI-697691">
        <id>Q99700</id>
    </interactant>
    <interactant intactId="EBI-77938">
        <id>Q99962</id>
        <label>SH3GL2</label>
    </interactant>
    <organismsDiffer>false</organismsDiffer>
    <experiments>9</experiments>
</comment>
<comment type="interaction">
    <interactant intactId="EBI-697691">
        <id>Q99700</id>
    </interactant>
    <interactant intactId="EBI-473910">
        <id>Q99963</id>
        <label>SH3GL3</label>
    </interactant>
    <organismsDiffer>false</organismsDiffer>
    <experiments>11</experiments>
</comment>
<comment type="interaction">
    <interactant intactId="EBI-697691">
        <id>Q99700</id>
    </interactant>
    <interactant intactId="EBI-372899">
        <id>Q13148</id>
        <label>TARDBP</label>
    </interactant>
    <organismsDiffer>false</organismsDiffer>
    <experiments>3</experiments>
</comment>
<comment type="interaction">
    <interactant intactId="EBI-25891409">
        <id>Q99700-5</id>
    </interactant>
    <interactant intactId="EBI-930964">
        <id>P54253</id>
        <label>ATXN1</label>
    </interactant>
    <organismsDiffer>false</organismsDiffer>
    <experiments>6</experiments>
</comment>
<comment type="interaction">
    <interactant intactId="EBI-25891409">
        <id>Q99700-5</id>
    </interactant>
    <interactant intactId="EBI-10988864">
        <id>P46379-2</id>
        <label>BAG6</label>
    </interactant>
    <organismsDiffer>false</organismsDiffer>
    <experiments>3</experiments>
</comment>
<comment type="interaction">
    <interactant intactId="EBI-25891409">
        <id>Q99700-5</id>
    </interactant>
    <interactant intactId="EBI-25891390">
        <id>Q9BTH3</id>
        <label>BIN1</label>
    </interactant>
    <organismsDiffer>false</organismsDiffer>
    <experiments>3</experiments>
</comment>
<comment type="interaction">
    <interactant intactId="EBI-25891409">
        <id>Q99700-5</id>
    </interactant>
    <interactant intactId="EBI-2837444">
        <id>Q8WUW1</id>
        <label>BRK1</label>
    </interactant>
    <organismsDiffer>false</organismsDiffer>
    <experiments>3</experiments>
</comment>
<comment type="interaction">
    <interactant intactId="EBI-25891409">
        <id>Q99700-5</id>
    </interactant>
    <interactant intactId="EBI-1165705">
        <id>P20963</id>
        <label>CD247</label>
    </interactant>
    <organismsDiffer>false</organismsDiffer>
    <experiments>3</experiments>
</comment>
<comment type="interaction">
    <interactant intactId="EBI-25891409">
        <id>Q99700-5</id>
    </interactant>
    <interactant intactId="EBI-81531">
        <id>P11940</id>
        <label>PABPC1</label>
    </interactant>
    <organismsDiffer>false</organismsDiffer>
    <experiments>3</experiments>
</comment>
<comment type="interaction">
    <interactant intactId="EBI-25891409">
        <id>Q99700-5</id>
    </interactant>
    <interactant intactId="EBI-12123390">
        <id>Q9NWB1-5</id>
        <label>RBFOX1</label>
    </interactant>
    <organismsDiffer>false</organismsDiffer>
    <experiments>3</experiments>
</comment>
<comment type="interaction">
    <interactant intactId="EBI-25891409">
        <id>Q99700-5</id>
    </interactant>
    <interactant intactId="EBI-6503765">
        <id>Q8IVP1</id>
        <label>SH3GL3</label>
    </interactant>
    <organismsDiffer>false</organismsDiffer>
    <experiments>3</experiments>
</comment>
<comment type="interaction">
    <interactant intactId="EBI-25891409">
        <id>Q99700-5</id>
    </interactant>
    <interactant intactId="EBI-1044428">
        <id>Q9UJZ1</id>
        <label>STOML2</label>
    </interactant>
    <organismsDiffer>false</organismsDiffer>
    <experiments>3</experiments>
</comment>
<comment type="interaction">
    <interactant intactId="EBI-25891409">
        <id>Q99700-5</id>
    </interactant>
    <interactant intactId="EBI-474067">
        <id>P55854</id>
        <label>SUMO3</label>
    </interactant>
    <organismsDiffer>false</organismsDiffer>
    <experiments>3</experiments>
</comment>
<comment type="interaction">
    <interactant intactId="EBI-25891409">
        <id>Q99700-5</id>
    </interactant>
    <interactant intactId="EBI-12157263">
        <id>P40337-2</id>
        <label>VHL</label>
    </interactant>
    <organismsDiffer>false</organismsDiffer>
    <experiments>3</experiments>
</comment>
<comment type="interaction">
    <interactant intactId="EBI-25891409">
        <id>Q99700-5</id>
    </interactant>
    <interactant intactId="EBI-10976904">
        <id>Q96E88</id>
    </interactant>
    <organismsDiffer>false</organismsDiffer>
    <experiments>3</experiments>
</comment>
<comment type="subcellular location">
    <subcellularLocation>
        <location evidence="1">Cytoplasm</location>
    </subcellularLocation>
</comment>
<comment type="alternative products">
    <event type="alternative splicing"/>
    <isoform>
        <id>Q99700-1</id>
        <name>1</name>
        <sequence type="displayed"/>
    </isoform>
    <isoform>
        <id>Q99700-2</id>
        <name>2</name>
        <sequence type="described" ref="VSP_011575 VSP_011577"/>
    </isoform>
    <isoform>
        <id>Q99700-3</id>
        <name>3</name>
        <sequence type="described" ref="VSP_011574 VSP_011576 VSP_011578 VSP_011579 VSP_011580 VSP_011581"/>
    </isoform>
    <isoform>
        <id>Q99700-4</id>
        <name>4</name>
        <sequence type="described" ref="VSP_011582"/>
    </isoform>
    <isoform>
        <id>Q99700-5</id>
        <name>5</name>
        <sequence type="described" ref="VSP_057285 VSP_057286 VSP_057287"/>
    </isoform>
</comment>
<comment type="tissue specificity">
    <text evidence="10 11 12 13">Expressed in the brain, heart, liver, skeletal muscle, pancreas and placenta. Isoform 1 is predominant in the brain and spinal cord. Isoform 4 is more abundant in the cerebellum. In the brain, broadly expressed in the amygdala, caudate nucleus, corpus callosum, hippocampus, hypothalamus, substantia nigra, subthalamic nucleus and thalamus.</text>
</comment>
<comment type="polymorphism">
    <text evidence="8 10 11 12">The poly-Gln region of ATXN2 is polymorphic: 17 to 29 repeats are found in the normal population. Higher numbers of repeats result in different disease phenotypes depending on the length of the expansion.</text>
</comment>
<comment type="disease" evidence="10 11 12">
    <disease id="DI-01067">
        <name>Spinocerebellar ataxia 2</name>
        <acronym>SCA2</acronym>
        <description>Spinocerebellar ataxia is a clinically and genetically heterogeneous group of cerebellar disorders. Patients show progressive incoordination of gait and often poor coordination of hands, speech and eye movements, due to cerebellum degeneration with variable involvement of the brainstem and spinal cord. SCA2 belongs to the autosomal dominant cerebellar ataxias type I (ADCA I) which are characterized by cerebellar ataxia in combination with additional clinical features like optic atrophy, ophthalmoplegia, bulbar and extrapyramidal signs, peripheral neuropathy and dementia. SCA2 is characterized by hyporeflexia, myoclonus and action tremor and dopamine-responsive parkinsonism. In some patients, SCA2 presents as pure familial parkinsonism without cerebellar signs.</description>
        <dbReference type="MIM" id="183090"/>
    </disease>
    <text>The disease is caused by variants affecting the gene represented in this entry. SCA2 is caused by expansion of a CAG repeat resulting in about 36 to 52 repeats in some patients. Longer expansions result in earlier the expansion, onset of the disease.</text>
</comment>
<comment type="disease" evidence="8">
    <disease id="DI-02859">
        <name>Amyotrophic lateral sclerosis 13</name>
        <acronym>ALS13</acronym>
        <description>A neurodegenerative disorder affecting upper motor neurons in the brain and lower motor neurons in the brain stem and spinal cord, resulting in fatal paralysis. Sensory abnormalities are absent. The pathologic hallmarks of the disease include pallor of the corticospinal tract due to loss of motor neurons, presence of ubiquitin-positive inclusions within surviving motor neurons, and deposition of pathologic aggregates. The etiology of amyotrophic lateral sclerosis is likely to be multifactorial, involving both genetic and environmental factors. The disease is inherited in 5-10% of the cases.</description>
        <dbReference type="MIM" id="183090"/>
    </disease>
    <text>Disease susceptibility is associated with variants affecting the gene represented in this entry. An increased risk for developing amyotrophic lateral sclerosis seems to be conferred by CAG repeat intermediate expansions greater than 23 but below the threshold for developing spinocerebellar ataxia.</text>
</comment>
<comment type="similarity">
    <text evidence="17">Belongs to the ataxin-2 family.</text>
</comment>
<feature type="chain" id="PRO_0000064756" description="Ataxin-2">
    <location>
        <begin position="1"/>
        <end position="1313"/>
    </location>
</feature>
<feature type="domain" description="Sm" evidence="3">
    <location>
        <begin position="267"/>
        <end position="344"/>
    </location>
</feature>
<feature type="region of interest" description="Disordered" evidence="4">
    <location>
        <begin position="1"/>
        <end position="255"/>
    </location>
</feature>
<feature type="region of interest" description="Disordered" evidence="4">
    <location>
        <begin position="459"/>
        <end position="954"/>
    </location>
</feature>
<feature type="region of interest" description="Disordered" evidence="4">
    <location>
        <begin position="1137"/>
        <end position="1219"/>
    </location>
</feature>
<feature type="compositionally biased region" description="Low complexity" evidence="4">
    <location>
        <begin position="1"/>
        <end position="12"/>
    </location>
</feature>
<feature type="compositionally biased region" description="Pro residues" evidence="4">
    <location>
        <begin position="48"/>
        <end position="65"/>
    </location>
</feature>
<feature type="compositionally biased region" description="Low complexity" evidence="4">
    <location>
        <begin position="104"/>
        <end position="114"/>
    </location>
</feature>
<feature type="compositionally biased region" description="Low complexity" evidence="4">
    <location>
        <begin position="141"/>
        <end position="154"/>
    </location>
</feature>
<feature type="compositionally biased region" description="Low complexity" evidence="4">
    <location>
        <begin position="166"/>
        <end position="187"/>
    </location>
</feature>
<feature type="compositionally biased region" description="Low complexity" evidence="4">
    <location>
        <begin position="204"/>
        <end position="234"/>
    </location>
</feature>
<feature type="compositionally biased region" description="Gly residues" evidence="4">
    <location>
        <begin position="235"/>
        <end position="244"/>
    </location>
</feature>
<feature type="compositionally biased region" description="Basic and acidic residues" evidence="4">
    <location>
        <begin position="459"/>
        <end position="471"/>
    </location>
</feature>
<feature type="compositionally biased region" description="Basic and acidic residues" evidence="4">
    <location>
        <begin position="478"/>
        <end position="492"/>
    </location>
</feature>
<feature type="compositionally biased region" description="Polar residues" evidence="4">
    <location>
        <begin position="508"/>
        <end position="544"/>
    </location>
</feature>
<feature type="compositionally biased region" description="Pro residues" evidence="4">
    <location>
        <begin position="552"/>
        <end position="562"/>
    </location>
</feature>
<feature type="compositionally biased region" description="Low complexity" evidence="4">
    <location>
        <begin position="563"/>
        <end position="581"/>
    </location>
</feature>
<feature type="compositionally biased region" description="Pro residues" evidence="4">
    <location>
        <begin position="582"/>
        <end position="598"/>
    </location>
</feature>
<feature type="compositionally biased region" description="Basic residues" evidence="4">
    <location>
        <begin position="627"/>
        <end position="637"/>
    </location>
</feature>
<feature type="compositionally biased region" description="Low complexity" evidence="4">
    <location>
        <begin position="666"/>
        <end position="681"/>
    </location>
</feature>
<feature type="compositionally biased region" description="Polar residues" evidence="4">
    <location>
        <begin position="693"/>
        <end position="703"/>
    </location>
</feature>
<feature type="compositionally biased region" description="Polar residues" evidence="4">
    <location>
        <begin position="768"/>
        <end position="777"/>
    </location>
</feature>
<feature type="compositionally biased region" description="Basic and acidic residues" evidence="4">
    <location>
        <begin position="788"/>
        <end position="804"/>
    </location>
</feature>
<feature type="compositionally biased region" description="Polar residues" evidence="4">
    <location>
        <begin position="807"/>
        <end position="820"/>
    </location>
</feature>
<feature type="compositionally biased region" description="Basic and acidic residues" evidence="4">
    <location>
        <begin position="821"/>
        <end position="844"/>
    </location>
</feature>
<feature type="compositionally biased region" description="Low complexity" evidence="4">
    <location>
        <begin position="847"/>
        <end position="871"/>
    </location>
</feature>
<feature type="compositionally biased region" description="Polar residues" evidence="4">
    <location>
        <begin position="880"/>
        <end position="891"/>
    </location>
</feature>
<feature type="compositionally biased region" description="Basic and acidic residues" evidence="4">
    <location>
        <begin position="893"/>
        <end position="910"/>
    </location>
</feature>
<feature type="compositionally biased region" description="Low complexity" evidence="4">
    <location>
        <begin position="925"/>
        <end position="936"/>
    </location>
</feature>
<feature type="compositionally biased region" description="Low complexity" evidence="4">
    <location>
        <begin position="1155"/>
        <end position="1192"/>
    </location>
</feature>
<feature type="compositionally biased region" description="Polar residues" evidence="4">
    <location>
        <begin position="1206"/>
        <end position="1219"/>
    </location>
</feature>
<feature type="modified residue" description="Phosphoserine" evidence="2">
    <location>
        <position position="248"/>
    </location>
</feature>
<feature type="modified residue" description="Phosphoserine" evidence="21">
    <location>
        <position position="393"/>
    </location>
</feature>
<feature type="modified residue" description="Phosphoserine" evidence="19 23">
    <location>
        <position position="466"/>
    </location>
</feature>
<feature type="modified residue" description="Phosphoserine" evidence="23">
    <location>
        <position position="478"/>
    </location>
</feature>
<feature type="modified residue" description="Phosphoserine" evidence="23">
    <location>
        <position position="508"/>
    </location>
</feature>
<feature type="modified residue" description="Phosphoserine" evidence="19">
    <location>
        <position position="554"/>
    </location>
</feature>
<feature type="modified residue" description="Phosphoserine" evidence="23 25">
    <location>
        <position position="624"/>
    </location>
</feature>
<feature type="modified residue" description="Asymmetric dimethylarginine; alternate" evidence="2">
    <location>
        <position position="640"/>
    </location>
</feature>
<feature type="modified residue" description="Omega-N-methylarginine; alternate" evidence="24">
    <location>
        <position position="640"/>
    </location>
</feature>
<feature type="modified residue" description="Phosphoserine" evidence="23">
    <location>
        <position position="642"/>
    </location>
</feature>
<feature type="modified residue" description="Phosphoserine" evidence="19 20 21 23">
    <location>
        <position position="684"/>
    </location>
</feature>
<feature type="modified residue" description="Phosphoserine" evidence="25">
    <location>
        <position position="728"/>
    </location>
</feature>
<feature type="modified residue" description="Phosphothreonine" evidence="19">
    <location>
        <position position="741"/>
    </location>
</feature>
<feature type="modified residue" description="Phosphoserine" evidence="23">
    <location>
        <position position="772"/>
    </location>
</feature>
<feature type="modified residue" description="Phosphoserine" evidence="18 21 22 23">
    <location>
        <position position="784"/>
    </location>
</feature>
<feature type="modified residue" description="Phosphoserine" evidence="2">
    <location>
        <position position="856"/>
    </location>
</feature>
<feature type="modified residue" description="Phosphoserine" evidence="19">
    <location>
        <position position="857"/>
    </location>
</feature>
<feature type="modified residue" description="Phosphoserine" evidence="19 22">
    <location>
        <position position="861"/>
    </location>
</feature>
<feature type="modified residue" description="Phosphoserine" evidence="22">
    <location>
        <position position="865"/>
    </location>
</feature>
<feature type="modified residue" description="Phosphoserine" evidence="2">
    <location>
        <position position="867"/>
    </location>
</feature>
<feature type="modified residue" description="Phosphoserine" evidence="19">
    <location>
        <position position="888"/>
    </location>
</feature>
<feature type="modified residue" description="Phosphoserine" evidence="19 23">
    <location>
        <position position="889"/>
    </location>
</feature>
<feature type="cross-link" description="Glycyl lysine isopeptide (Lys-Gly) (interchain with G-Cter in SUMO2)" evidence="26">
    <location>
        <position position="893"/>
    </location>
</feature>
<feature type="splice variant" id="VSP_011574" description="In isoform 3." evidence="14">
    <location>
        <begin position="1"/>
        <end position="981"/>
    </location>
</feature>
<feature type="splice variant" id="VSP_057285" description="In isoform 5." evidence="15">
    <location>
        <begin position="1"/>
        <end position="265"/>
    </location>
</feature>
<feature type="splice variant" id="VSP_057286" description="In isoform 5." evidence="15">
    <location>
        <begin position="277"/>
        <end position="300"/>
    </location>
</feature>
<feature type="splice variant" id="VSP_011575" description="In isoform 2." evidence="16">
    <original>PLYPIPMTPMPVNQAK</original>
    <variation>YQICPNSGKTSIIRVP</variation>
    <location>
        <begin position="980"/>
        <end position="995"/>
    </location>
</feature>
<feature type="splice variant" id="VSP_011576" description="In isoform 3." evidence="14">
    <original>YPIPMTPMPVNQAKTYR</original>
    <variation>MYYAVEILFNRQSAFFS</variation>
    <location>
        <begin position="982"/>
        <end position="998"/>
    </location>
</feature>
<feature type="splice variant" id="VSP_011577" description="In isoform 2." evidence="16">
    <location>
        <begin position="996"/>
        <end position="1313"/>
    </location>
</feature>
<feature type="splice variant" id="VSP_057287" description="In isoform 5." evidence="15">
    <original>ACPKLPYNKETSPSFYFAI</original>
    <variation>V</variation>
    <location>
        <begin position="1106"/>
        <end position="1124"/>
    </location>
</feature>
<feature type="splice variant" id="VSP_011578" description="In isoform 3." evidence="14">
    <location>
        <begin position="1106"/>
        <end position="1123"/>
    </location>
</feature>
<feature type="splice variant" id="VSP_011579" description="In isoform 3." evidence="14">
    <original>I</original>
    <variation>V</variation>
    <location>
        <position position="1124"/>
    </location>
</feature>
<feature type="splice variant" id="VSP_011582" description="In isoform 4." evidence="17">
    <location>
        <begin position="1244"/>
        <end position="1313"/>
    </location>
</feature>
<feature type="splice variant" id="VSP_011580" description="In isoform 3." evidence="14">
    <original>AHVQSGMVP</original>
    <variation>VIPALANFL</variation>
    <location>
        <begin position="1249"/>
        <end position="1257"/>
    </location>
</feature>
<feature type="splice variant" id="VSP_011581" description="In isoform 3." evidence="14">
    <location>
        <begin position="1258"/>
        <end position="1313"/>
    </location>
</feature>
<feature type="sequence variant" id="VAR_047629" description="In dbSNP:rs695871." evidence="10 12">
    <original>L</original>
    <variation>V</variation>
    <location>
        <position position="107"/>
    </location>
</feature>
<feature type="sequence variant" id="VAR_047630" description="In dbSNP:rs7969300.">
    <original>S</original>
    <variation>N</variation>
    <location>
        <position position="248"/>
    </location>
</feature>
<feature type="sequence conflict" description="In Ref. 1; AAB19200 and 6; CAA69589." evidence="17" ref="1 6">
    <location>
        <position position="188"/>
    </location>
</feature>
<dbReference type="EMBL" id="U70323">
    <property type="protein sequence ID" value="AAB19200.1"/>
    <property type="molecule type" value="mRNA"/>
</dbReference>
<dbReference type="EMBL" id="AK128613">
    <property type="protein sequence ID" value="BAC87528.1"/>
    <property type="molecule type" value="mRNA"/>
</dbReference>
<dbReference type="EMBL" id="AC002395">
    <property type="status" value="NOT_ANNOTATED_CDS"/>
    <property type="molecule type" value="Genomic_DNA"/>
</dbReference>
<dbReference type="EMBL" id="AC137055">
    <property type="status" value="NOT_ANNOTATED_CDS"/>
    <property type="molecule type" value="Genomic_DNA"/>
</dbReference>
<dbReference type="EMBL" id="KF455720">
    <property type="status" value="NOT_ANNOTATED_CDS"/>
    <property type="molecule type" value="Genomic_DNA"/>
</dbReference>
<dbReference type="EMBL" id="BC114546">
    <property type="protein sequence ID" value="AAI14547.1"/>
    <property type="molecule type" value="mRNA"/>
</dbReference>
<dbReference type="EMBL" id="Y08262">
    <property type="protein sequence ID" value="CAA69589.1"/>
    <property type="molecule type" value="mRNA"/>
</dbReference>
<dbReference type="CCDS" id="CCDS81738.1">
    <molecule id="Q99700-5"/>
</dbReference>
<dbReference type="RefSeq" id="NP_001297052.1">
    <molecule id="Q99700-5"/>
    <property type="nucleotide sequence ID" value="NM_001310123.1"/>
</dbReference>
<dbReference type="RefSeq" id="NP_002964.3">
    <property type="nucleotide sequence ID" value="NM_002973.3"/>
</dbReference>
<dbReference type="PDB" id="3KTR">
    <property type="method" value="X-ray"/>
    <property type="resolution" value="1.70 A"/>
    <property type="chains" value="B=912-928"/>
</dbReference>
<dbReference type="PDBsum" id="3KTR"/>
<dbReference type="SMR" id="Q99700"/>
<dbReference type="BioGRID" id="112218">
    <property type="interactions" value="312"/>
</dbReference>
<dbReference type="DIP" id="DIP-33372N"/>
<dbReference type="ELM" id="Q99700"/>
<dbReference type="FunCoup" id="Q99700">
    <property type="interactions" value="1901"/>
</dbReference>
<dbReference type="IntAct" id="Q99700">
    <property type="interactions" value="158"/>
</dbReference>
<dbReference type="MINT" id="Q99700"/>
<dbReference type="STRING" id="9606.ENSP00000446576"/>
<dbReference type="BindingDB" id="Q99700"/>
<dbReference type="ChEMBL" id="CHEMBL1795085"/>
<dbReference type="GlyCosmos" id="Q99700">
    <property type="glycosylation" value="7 sites, 1 glycan"/>
</dbReference>
<dbReference type="GlyGen" id="Q99700">
    <property type="glycosylation" value="19 sites, 1 O-linked glycan (15 sites)"/>
</dbReference>
<dbReference type="iPTMnet" id="Q99700"/>
<dbReference type="MetOSite" id="Q99700"/>
<dbReference type="PhosphoSitePlus" id="Q99700"/>
<dbReference type="SwissPalm" id="Q99700"/>
<dbReference type="BioMuta" id="ATXN2"/>
<dbReference type="DMDM" id="215273941"/>
<dbReference type="jPOST" id="Q99700"/>
<dbReference type="MassIVE" id="Q99700"/>
<dbReference type="PaxDb" id="9606-ENSP00000366843"/>
<dbReference type="PeptideAtlas" id="Q99700"/>
<dbReference type="ProteomicsDB" id="61268"/>
<dbReference type="ProteomicsDB" id="78409">
    <molecule id="Q99700-1"/>
</dbReference>
<dbReference type="ProteomicsDB" id="78410">
    <molecule id="Q99700-2"/>
</dbReference>
<dbReference type="ProteomicsDB" id="78412">
    <molecule id="Q99700-4"/>
</dbReference>
<dbReference type="Pumba" id="Q99700"/>
<dbReference type="Antibodypedia" id="18563">
    <property type="antibodies" value="275 antibodies from 36 providers"/>
</dbReference>
<dbReference type="DNASU" id="6311"/>
<dbReference type="Ensembl" id="ENST00000535949.5">
    <molecule id="Q99700-5"/>
    <property type="protein sequence ID" value="ENSP00000439338.1"/>
    <property type="gene ID" value="ENSG00000204842.18"/>
</dbReference>
<dbReference type="Ensembl" id="ENST00000550104.5">
    <molecule id="Q99700-1"/>
    <property type="protein sequence ID" value="ENSP00000446576.2"/>
    <property type="gene ID" value="ENSG00000204842.18"/>
</dbReference>
<dbReference type="Ensembl" id="ENST00000616825.4">
    <molecule id="Q99700-5"/>
    <property type="protein sequence ID" value="ENSP00000481448.1"/>
    <property type="gene ID" value="ENSG00000204842.18"/>
</dbReference>
<dbReference type="GeneID" id="6311"/>
<dbReference type="KEGG" id="hsa:6311"/>
<dbReference type="UCSC" id="uc001tsj.3">
    <molecule id="Q99700-1"/>
    <property type="organism name" value="human"/>
</dbReference>
<dbReference type="AGR" id="HGNC:10555"/>
<dbReference type="CTD" id="6311"/>
<dbReference type="DisGeNET" id="6311"/>
<dbReference type="GeneCards" id="ATXN2"/>
<dbReference type="GeneReviews" id="ATXN2"/>
<dbReference type="HGNC" id="HGNC:10555">
    <property type="gene designation" value="ATXN2"/>
</dbReference>
<dbReference type="HPA" id="ENSG00000204842">
    <property type="expression patterns" value="Low tissue specificity"/>
</dbReference>
<dbReference type="MalaCards" id="ATXN2"/>
<dbReference type="MIM" id="183090">
    <property type="type" value="phenotype"/>
</dbReference>
<dbReference type="MIM" id="601517">
    <property type="type" value="gene"/>
</dbReference>
<dbReference type="neXtProt" id="NX_Q99700"/>
<dbReference type="OpenTargets" id="ENSG00000204842"/>
<dbReference type="Orphanet" id="803">
    <property type="disease" value="Amyotrophic lateral sclerosis"/>
</dbReference>
<dbReference type="Orphanet" id="98756">
    <property type="disease" value="Spinocerebellar ataxia type 2"/>
</dbReference>
<dbReference type="PharmGKB" id="PA34968"/>
<dbReference type="VEuPathDB" id="HostDB:ENSG00000204842"/>
<dbReference type="eggNOG" id="KOG2375">
    <property type="taxonomic scope" value="Eukaryota"/>
</dbReference>
<dbReference type="GeneTree" id="ENSGT00940000156812"/>
<dbReference type="InParanoid" id="Q99700"/>
<dbReference type="OMA" id="RMQMSAS"/>
<dbReference type="OrthoDB" id="2275718at2759"/>
<dbReference type="PAN-GO" id="Q99700">
    <property type="GO annotations" value="3 GO annotations based on evolutionary models"/>
</dbReference>
<dbReference type="PhylomeDB" id="Q99700"/>
<dbReference type="TreeFam" id="TF326591"/>
<dbReference type="PathwayCommons" id="Q99700"/>
<dbReference type="SignaLink" id="Q99700"/>
<dbReference type="SIGNOR" id="Q99700"/>
<dbReference type="BioGRID-ORCS" id="6311">
    <property type="hits" value="15 hits in 1159 CRISPR screens"/>
</dbReference>
<dbReference type="CD-CODE" id="232F8A39">
    <property type="entry name" value="P-body"/>
</dbReference>
<dbReference type="CD-CODE" id="DEE660B4">
    <property type="entry name" value="Stress granule"/>
</dbReference>
<dbReference type="CD-CODE" id="E1879998">
    <property type="entry name" value="Synthetic Condensate 000375"/>
</dbReference>
<dbReference type="ChiTaRS" id="ATXN2">
    <property type="organism name" value="human"/>
</dbReference>
<dbReference type="GeneWiki" id="ATXN2"/>
<dbReference type="GenomeRNAi" id="6311"/>
<dbReference type="Pharos" id="Q99700">
    <property type="development level" value="Tbio"/>
</dbReference>
<dbReference type="PRO" id="PR:Q99700"/>
<dbReference type="Proteomes" id="UP000005640">
    <property type="component" value="Chromosome 12"/>
</dbReference>
<dbReference type="RNAct" id="Q99700">
    <property type="molecule type" value="protein"/>
</dbReference>
<dbReference type="Bgee" id="ENSG00000204842">
    <property type="expression patterns" value="Expressed in buccal mucosa cell and 197 other cell types or tissues"/>
</dbReference>
<dbReference type="ExpressionAtlas" id="Q99700">
    <property type="expression patterns" value="baseline and differential"/>
</dbReference>
<dbReference type="GO" id="GO:0005737">
    <property type="term" value="C:cytoplasm"/>
    <property type="evidence" value="ECO:0000314"/>
    <property type="project" value="UniProtKB"/>
</dbReference>
<dbReference type="GO" id="GO:0010494">
    <property type="term" value="C:cytoplasmic stress granule"/>
    <property type="evidence" value="ECO:0000314"/>
    <property type="project" value="UniProtKB"/>
</dbReference>
<dbReference type="GO" id="GO:0005829">
    <property type="term" value="C:cytosol"/>
    <property type="evidence" value="ECO:0000314"/>
    <property type="project" value="HPA"/>
</dbReference>
<dbReference type="GO" id="GO:0005794">
    <property type="term" value="C:Golgi apparatus"/>
    <property type="evidence" value="ECO:0000314"/>
    <property type="project" value="UniProtKB"/>
</dbReference>
<dbReference type="GO" id="GO:0016020">
    <property type="term" value="C:membrane"/>
    <property type="evidence" value="ECO:0007005"/>
    <property type="project" value="UniProtKB"/>
</dbReference>
<dbReference type="GO" id="GO:0048471">
    <property type="term" value="C:perinuclear region of cytoplasm"/>
    <property type="evidence" value="ECO:0000314"/>
    <property type="project" value="UniProtKB"/>
</dbReference>
<dbReference type="GO" id="GO:1990904">
    <property type="term" value="C:ribonucleoprotein complex"/>
    <property type="evidence" value="ECO:0000314"/>
    <property type="project" value="UniProtKB"/>
</dbReference>
<dbReference type="GO" id="GO:0005802">
    <property type="term" value="C:trans-Golgi network"/>
    <property type="evidence" value="ECO:0000314"/>
    <property type="project" value="UniProtKB"/>
</dbReference>
<dbReference type="GO" id="GO:0005154">
    <property type="term" value="F:epidermal growth factor receptor binding"/>
    <property type="evidence" value="ECO:0000353"/>
    <property type="project" value="UniProtKB"/>
</dbReference>
<dbReference type="GO" id="GO:0003729">
    <property type="term" value="F:mRNA binding"/>
    <property type="evidence" value="ECO:0000318"/>
    <property type="project" value="GO_Central"/>
</dbReference>
<dbReference type="GO" id="GO:0003723">
    <property type="term" value="F:RNA binding"/>
    <property type="evidence" value="ECO:0007005"/>
    <property type="project" value="UniProtKB"/>
</dbReference>
<dbReference type="GO" id="GO:0002091">
    <property type="term" value="P:negative regulation of receptor internalization"/>
    <property type="evidence" value="ECO:0000315"/>
    <property type="project" value="UniProtKB"/>
</dbReference>
<dbReference type="GO" id="GO:0033962">
    <property type="term" value="P:P-body assembly"/>
    <property type="evidence" value="ECO:0000315"/>
    <property type="project" value="UniProtKB"/>
</dbReference>
<dbReference type="GO" id="GO:0006417">
    <property type="term" value="P:regulation of translation"/>
    <property type="evidence" value="ECO:0000303"/>
    <property type="project" value="UniProtKB"/>
</dbReference>
<dbReference type="GO" id="GO:0016070">
    <property type="term" value="P:RNA metabolic process"/>
    <property type="evidence" value="ECO:0000303"/>
    <property type="project" value="UniProtKB"/>
</dbReference>
<dbReference type="GO" id="GO:0050658">
    <property type="term" value="P:RNA transport"/>
    <property type="evidence" value="ECO:0000303"/>
    <property type="project" value="UniProtKB"/>
</dbReference>
<dbReference type="GO" id="GO:0034063">
    <property type="term" value="P:stress granule assembly"/>
    <property type="evidence" value="ECO:0000315"/>
    <property type="project" value="UniProtKB"/>
</dbReference>
<dbReference type="CDD" id="cd00600">
    <property type="entry name" value="Sm_like"/>
    <property type="match status" value="1"/>
</dbReference>
<dbReference type="IDEAL" id="IID00580"/>
<dbReference type="InterPro" id="IPR045117">
    <property type="entry name" value="ATXN2-like"/>
</dbReference>
<dbReference type="InterPro" id="IPR010920">
    <property type="entry name" value="LSM_dom_sf"/>
</dbReference>
<dbReference type="InterPro" id="IPR009604">
    <property type="entry name" value="LsmAD_domain"/>
</dbReference>
<dbReference type="InterPro" id="IPR009818">
    <property type="entry name" value="PAM2_motif"/>
</dbReference>
<dbReference type="InterPro" id="IPR047575">
    <property type="entry name" value="Sm"/>
</dbReference>
<dbReference type="InterPro" id="IPR025852">
    <property type="entry name" value="SM_dom_ATX"/>
</dbReference>
<dbReference type="PANTHER" id="PTHR12854">
    <property type="entry name" value="ATAXIN 2-RELATED"/>
    <property type="match status" value="1"/>
</dbReference>
<dbReference type="PANTHER" id="PTHR12854:SF11">
    <property type="entry name" value="ATAXIN-2"/>
    <property type="match status" value="1"/>
</dbReference>
<dbReference type="Pfam" id="PF06741">
    <property type="entry name" value="LsmAD"/>
    <property type="match status" value="1"/>
</dbReference>
<dbReference type="Pfam" id="PF07145">
    <property type="entry name" value="PAM2"/>
    <property type="match status" value="1"/>
</dbReference>
<dbReference type="Pfam" id="PF14438">
    <property type="entry name" value="SM-ATX"/>
    <property type="match status" value="1"/>
</dbReference>
<dbReference type="SMART" id="SM01272">
    <property type="entry name" value="LsmAD"/>
    <property type="match status" value="1"/>
</dbReference>
<dbReference type="SUPFAM" id="SSF81995">
    <property type="entry name" value="beta-sandwich domain of Sec23/24"/>
    <property type="match status" value="1"/>
</dbReference>
<dbReference type="SUPFAM" id="SSF50182">
    <property type="entry name" value="Sm-like ribonucleoproteins"/>
    <property type="match status" value="1"/>
</dbReference>
<dbReference type="PROSITE" id="PS52002">
    <property type="entry name" value="SM"/>
    <property type="match status" value="1"/>
</dbReference>
<name>ATX2_HUMAN</name>
<protein>
    <recommendedName>
        <fullName>Ataxin-2</fullName>
    </recommendedName>
    <alternativeName>
        <fullName>Spinocerebellar ataxia type 2 protein</fullName>
    </alternativeName>
    <alternativeName>
        <fullName>Trinucleotide repeat-containing gene 13 protein</fullName>
    </alternativeName>
</protein>
<sequence length="1313" mass="140283">MRSAAAAPRSPAVATESRRFAAARWPGWRSLQRPARRSGRGGGGAAPGPYPSAAPPPPGPGPPPSRQSSPPSASDCFGSNGNGGGAFRPGSRRLLGLGGPPRPFVVLLLPLASPGAPPAAPTRASPLGARASPPRSGVSLARPAPGCPRPACEPVYGPLTMSLKPQQQQQQQQQQQQQQQQQQQQQQQPPPAAANVRKPGGSGLLASPAAAPSPSSSSVSSSSATAPSSVVAATSGGGRPGLGRGRNSNKGLPQSTISFDGIYANMRMVHILTSVVGSKCEVQVKNGGIYEGVFKTYSPKCDLVLDAAHEKSTESSSGPKREEIMESILFKCSDFVVVQFKDMDSSYAKRDAFTDSAISAKVNGEHKEKDLEPWDAGELTANEELEALENDVSNGWDPNDMFRYNEENYGVVSTYDSSLSSYTVPLERDNSEEFLKREARANQLAEEIESSAQYKARVALENDDRSEEEKYTAVQRNSSEREGHSINTRENKYIPPGQRNREVISWGSGRQNSPRMGQPGSGSMPSRSTSHTSDFNPNSGSDQRVVNGGVPWPSPCPSPSSRPPSRYQSGPNSLPPRAATPTRPPSRPPSRPSRPPSHPSAHGSPAPVSTMPKRMSSEGPPRMSPKAQRHPRNHRVSAGRGSISSGLEFVSHNPPSEAATPPVARTSPSGGTWSSVVSGVPRLSPKTHRPRSPRQNSIGNTPSGPVLASPQAGIIPTEAVAMPIPAASPTPASPASNRAVTPSSEAKDSRLQDQRQNSPAGNKENIKPNETSPSFSKAENKGISPVVSEHRKQIDDLKKFKNDFRLQPSSTSESMDQLLNKNREGEKSRDLIKDKIEPSAKDSFIENSSSNCTSGSSKPNSPSISPSILSNTEHKRGPEVTSQGVQTSSPACKQEKDDKEEKKDAAEQVRKSTLNPNAKEFNPRSFSQPKPSTTPTSPRPQAQPSPSMVGHQQPTPVYTQPVCFAPNMMYPVPVSPGVQPLYPIPMTPMPVNQAKTYRAVPNMPQQRQDQHHQSAMMHPASAAGPPIAATPPAYSTQYVAYSPQQFPNQPLVQHVPHYQSQHPHVYSPVIQGNARMMAPPTHAQPGLVSSSATQYGAHEQTHAMYACPKLPYNKETSPSFYFAISTGSLAQQYAHPNATLHPHTPHPQPSATPTGQQQSQHGGSHPAPSPVQHHQHQAAQALHLASPQQQSAIYHAGLAPTPPSMTPASNTQSPQNSFPAAQQTVFTIHPSHVQPAYTNPPHMAHVPQAHVQSGMVPSHPTAHAPMMLMTTQPPGGPQAALAQSALQPIPVSTTAHFPYMTHPSVQAHHQQQL</sequence>
<reference key="1">
    <citation type="journal article" date="1996" name="Nat. Genet.">
        <title>Moderate expansion of a normally biallelic trinucleotide repeat in spinocerebellar ataxia type 2.</title>
        <authorList>
            <person name="Pulst S.-M."/>
            <person name="Nechiporuk A."/>
            <person name="Nechiporuk T."/>
            <person name="Gispert S."/>
            <person name="Chen X.-N."/>
            <person name="Lopes-Cendes I."/>
            <person name="Pearlman S."/>
            <person name="Starkman S."/>
            <person name="Orozco-Diaz G."/>
            <person name="Lunkes A."/>
            <person name="DeJong P."/>
            <person name="Rouleau G.A."/>
            <person name="Auburger G."/>
            <person name="Korenberg J.R."/>
            <person name="Figueroa C."/>
            <person name="Sahba S."/>
        </authorList>
    </citation>
    <scope>NUCLEOTIDE SEQUENCE [MRNA] (ISOFORM 1)</scope>
    <scope>POLYMORPHISM</scope>
    <scope>INVOLVEMENT IN SCA2</scope>
    <scope>TISSUE SPECIFICITY</scope>
    <scope>VARIANT VAL-107</scope>
</reference>
<reference key="2">
    <citation type="journal article" date="1996" name="Nat. Genet.">
        <title>Identification of the spinocerebellar ataxia type 2 gene using a direct identification of repeat expansion and cloning technique, DIRECT.</title>
        <authorList>
            <person name="Sanpei K."/>
            <person name="Takano H."/>
            <person name="Igarashi S."/>
            <person name="Sato T."/>
            <person name="Oyake M."/>
            <person name="Sasaki H."/>
            <person name="Wakisaka A."/>
            <person name="Tashiro K."/>
            <person name="Ishida Y."/>
            <person name="Ikeuchi T."/>
            <person name="Koide R."/>
            <person name="Saito M."/>
            <person name="Sato A."/>
            <person name="Tanaka T."/>
            <person name="Hanyu S."/>
            <person name="Takiyama Y."/>
            <person name="Nishizawa M."/>
            <person name="Shimizu N."/>
            <person name="Nomura Y."/>
            <person name="Segawa M."/>
            <person name="Iwabuchi K."/>
            <person name="Eguchi I."/>
            <person name="Tanaka H."/>
            <person name="Takahashi H."/>
            <person name="Tsuji S."/>
        </authorList>
    </citation>
    <scope>NUCLEOTIDE SEQUENCE [MRNA] (ISOFORM 1)</scope>
    <scope>POLYMORPHISM</scope>
    <scope>INVOLVEMENT IN SCA2</scope>
    <scope>TISSUE SPECIFICITY</scope>
</reference>
<reference key="3">
    <citation type="journal article" date="2004" name="Nat. Genet.">
        <title>Complete sequencing and characterization of 21,243 full-length human cDNAs.</title>
        <authorList>
            <person name="Ota T."/>
            <person name="Suzuki Y."/>
            <person name="Nishikawa T."/>
            <person name="Otsuki T."/>
            <person name="Sugiyama T."/>
            <person name="Irie R."/>
            <person name="Wakamatsu A."/>
            <person name="Hayashi K."/>
            <person name="Sato H."/>
            <person name="Nagai K."/>
            <person name="Kimura K."/>
            <person name="Makita H."/>
            <person name="Sekine M."/>
            <person name="Obayashi M."/>
            <person name="Nishi T."/>
            <person name="Shibahara T."/>
            <person name="Tanaka T."/>
            <person name="Ishii S."/>
            <person name="Yamamoto J."/>
            <person name="Saito K."/>
            <person name="Kawai Y."/>
            <person name="Isono Y."/>
            <person name="Nakamura Y."/>
            <person name="Nagahari K."/>
            <person name="Murakami K."/>
            <person name="Yasuda T."/>
            <person name="Iwayanagi T."/>
            <person name="Wagatsuma M."/>
            <person name="Shiratori A."/>
            <person name="Sudo H."/>
            <person name="Hosoiri T."/>
            <person name="Kaku Y."/>
            <person name="Kodaira H."/>
            <person name="Kondo H."/>
            <person name="Sugawara M."/>
            <person name="Takahashi M."/>
            <person name="Kanda K."/>
            <person name="Yokoi T."/>
            <person name="Furuya T."/>
            <person name="Kikkawa E."/>
            <person name="Omura Y."/>
            <person name="Abe K."/>
            <person name="Kamihara K."/>
            <person name="Katsuta N."/>
            <person name="Sato K."/>
            <person name="Tanikawa M."/>
            <person name="Yamazaki M."/>
            <person name="Ninomiya K."/>
            <person name="Ishibashi T."/>
            <person name="Yamashita H."/>
            <person name="Murakawa K."/>
            <person name="Fujimori K."/>
            <person name="Tanai H."/>
            <person name="Kimata M."/>
            <person name="Watanabe M."/>
            <person name="Hiraoka S."/>
            <person name="Chiba Y."/>
            <person name="Ishida S."/>
            <person name="Ono Y."/>
            <person name="Takiguchi S."/>
            <person name="Watanabe S."/>
            <person name="Yosida M."/>
            <person name="Hotuta T."/>
            <person name="Kusano J."/>
            <person name="Kanehori K."/>
            <person name="Takahashi-Fujii A."/>
            <person name="Hara H."/>
            <person name="Tanase T.-O."/>
            <person name="Nomura Y."/>
            <person name="Togiya S."/>
            <person name="Komai F."/>
            <person name="Hara R."/>
            <person name="Takeuchi K."/>
            <person name="Arita M."/>
            <person name="Imose N."/>
            <person name="Musashino K."/>
            <person name="Yuuki H."/>
            <person name="Oshima A."/>
            <person name="Sasaki N."/>
            <person name="Aotsuka S."/>
            <person name="Yoshikawa Y."/>
            <person name="Matsunawa H."/>
            <person name="Ichihara T."/>
            <person name="Shiohata N."/>
            <person name="Sano S."/>
            <person name="Moriya S."/>
            <person name="Momiyama H."/>
            <person name="Satoh N."/>
            <person name="Takami S."/>
            <person name="Terashima Y."/>
            <person name="Suzuki O."/>
            <person name="Nakagawa S."/>
            <person name="Senoh A."/>
            <person name="Mizoguchi H."/>
            <person name="Goto Y."/>
            <person name="Shimizu F."/>
            <person name="Wakebe H."/>
            <person name="Hishigaki H."/>
            <person name="Watanabe T."/>
            <person name="Sugiyama A."/>
            <person name="Takemoto M."/>
            <person name="Kawakami B."/>
            <person name="Yamazaki M."/>
            <person name="Watanabe K."/>
            <person name="Kumagai A."/>
            <person name="Itakura S."/>
            <person name="Fukuzumi Y."/>
            <person name="Fujimori Y."/>
            <person name="Komiyama M."/>
            <person name="Tashiro H."/>
            <person name="Tanigami A."/>
            <person name="Fujiwara T."/>
            <person name="Ono T."/>
            <person name="Yamada K."/>
            <person name="Fujii Y."/>
            <person name="Ozaki K."/>
            <person name="Hirao M."/>
            <person name="Ohmori Y."/>
            <person name="Kawabata A."/>
            <person name="Hikiji T."/>
            <person name="Kobatake N."/>
            <person name="Inagaki H."/>
            <person name="Ikema Y."/>
            <person name="Okamoto S."/>
            <person name="Okitani R."/>
            <person name="Kawakami T."/>
            <person name="Noguchi S."/>
            <person name="Itoh T."/>
            <person name="Shigeta K."/>
            <person name="Senba T."/>
            <person name="Matsumura K."/>
            <person name="Nakajima Y."/>
            <person name="Mizuno T."/>
            <person name="Morinaga M."/>
            <person name="Sasaki M."/>
            <person name="Togashi T."/>
            <person name="Oyama M."/>
            <person name="Hata H."/>
            <person name="Watanabe M."/>
            <person name="Komatsu T."/>
            <person name="Mizushima-Sugano J."/>
            <person name="Satoh T."/>
            <person name="Shirai Y."/>
            <person name="Takahashi Y."/>
            <person name="Nakagawa K."/>
            <person name="Okumura K."/>
            <person name="Nagase T."/>
            <person name="Nomura N."/>
            <person name="Kikuchi H."/>
            <person name="Masuho Y."/>
            <person name="Yamashita R."/>
            <person name="Nakai K."/>
            <person name="Yada T."/>
            <person name="Nakamura Y."/>
            <person name="Ohara O."/>
            <person name="Isogai T."/>
            <person name="Sugano S."/>
        </authorList>
    </citation>
    <scope>NUCLEOTIDE SEQUENCE [LARGE SCALE MRNA] (ISOFORM 3)</scope>
    <source>
        <tissue>Trachea</tissue>
    </source>
</reference>
<reference key="4">
    <citation type="journal article" date="2006" name="Nature">
        <title>The finished DNA sequence of human chromosome 12.</title>
        <authorList>
            <person name="Scherer S.E."/>
            <person name="Muzny D.M."/>
            <person name="Buhay C.J."/>
            <person name="Chen R."/>
            <person name="Cree A."/>
            <person name="Ding Y."/>
            <person name="Dugan-Rocha S."/>
            <person name="Gill R."/>
            <person name="Gunaratne P."/>
            <person name="Harris R.A."/>
            <person name="Hawes A.C."/>
            <person name="Hernandez J."/>
            <person name="Hodgson A.V."/>
            <person name="Hume J."/>
            <person name="Jackson A."/>
            <person name="Khan Z.M."/>
            <person name="Kovar-Smith C."/>
            <person name="Lewis L.R."/>
            <person name="Lozado R.J."/>
            <person name="Metzker M.L."/>
            <person name="Milosavljevic A."/>
            <person name="Miner G.R."/>
            <person name="Montgomery K.T."/>
            <person name="Morgan M.B."/>
            <person name="Nazareth L.V."/>
            <person name="Scott G."/>
            <person name="Sodergren E."/>
            <person name="Song X.-Z."/>
            <person name="Steffen D."/>
            <person name="Lovering R.C."/>
            <person name="Wheeler D.A."/>
            <person name="Worley K.C."/>
            <person name="Yuan Y."/>
            <person name="Zhang Z."/>
            <person name="Adams C.Q."/>
            <person name="Ansari-Lari M.A."/>
            <person name="Ayele M."/>
            <person name="Brown M.J."/>
            <person name="Chen G."/>
            <person name="Chen Z."/>
            <person name="Clerc-Blankenburg K.P."/>
            <person name="Davis C."/>
            <person name="Delgado O."/>
            <person name="Dinh H.H."/>
            <person name="Draper H."/>
            <person name="Gonzalez-Garay M.L."/>
            <person name="Havlak P."/>
            <person name="Jackson L.R."/>
            <person name="Jacob L.S."/>
            <person name="Kelly S.H."/>
            <person name="Li L."/>
            <person name="Li Z."/>
            <person name="Liu J."/>
            <person name="Liu W."/>
            <person name="Lu J."/>
            <person name="Maheshwari M."/>
            <person name="Nguyen B.-V."/>
            <person name="Okwuonu G.O."/>
            <person name="Pasternak S."/>
            <person name="Perez L.M."/>
            <person name="Plopper F.J.H."/>
            <person name="Santibanez J."/>
            <person name="Shen H."/>
            <person name="Tabor P.E."/>
            <person name="Verduzco D."/>
            <person name="Waldron L."/>
            <person name="Wang Q."/>
            <person name="Williams G.A."/>
            <person name="Zhang J."/>
            <person name="Zhou J."/>
            <person name="Allen C.C."/>
            <person name="Amin A.G."/>
            <person name="Anyalebechi V."/>
            <person name="Bailey M."/>
            <person name="Barbaria J.A."/>
            <person name="Bimage K.E."/>
            <person name="Bryant N.P."/>
            <person name="Burch P.E."/>
            <person name="Burkett C.E."/>
            <person name="Burrell K.L."/>
            <person name="Calderon E."/>
            <person name="Cardenas V."/>
            <person name="Carter K."/>
            <person name="Casias K."/>
            <person name="Cavazos I."/>
            <person name="Cavazos S.R."/>
            <person name="Ceasar H."/>
            <person name="Chacko J."/>
            <person name="Chan S.N."/>
            <person name="Chavez D."/>
            <person name="Christopoulos C."/>
            <person name="Chu J."/>
            <person name="Cockrell R."/>
            <person name="Cox C.D."/>
            <person name="Dang M."/>
            <person name="Dathorne S.R."/>
            <person name="David R."/>
            <person name="Davis C.M."/>
            <person name="Davy-Carroll L."/>
            <person name="Deshazo D.R."/>
            <person name="Donlin J.E."/>
            <person name="D'Souza L."/>
            <person name="Eaves K.A."/>
            <person name="Egan A."/>
            <person name="Emery-Cohen A.J."/>
            <person name="Escotto M."/>
            <person name="Flagg N."/>
            <person name="Forbes L.D."/>
            <person name="Gabisi A.M."/>
            <person name="Garza M."/>
            <person name="Hamilton C."/>
            <person name="Henderson N."/>
            <person name="Hernandez O."/>
            <person name="Hines S."/>
            <person name="Hogues M.E."/>
            <person name="Huang M."/>
            <person name="Idlebird D.G."/>
            <person name="Johnson R."/>
            <person name="Jolivet A."/>
            <person name="Jones S."/>
            <person name="Kagan R."/>
            <person name="King L.M."/>
            <person name="Leal B."/>
            <person name="Lebow H."/>
            <person name="Lee S."/>
            <person name="LeVan J.M."/>
            <person name="Lewis L.C."/>
            <person name="London P."/>
            <person name="Lorensuhewa L.M."/>
            <person name="Loulseged H."/>
            <person name="Lovett D.A."/>
            <person name="Lucier A."/>
            <person name="Lucier R.L."/>
            <person name="Ma J."/>
            <person name="Madu R.C."/>
            <person name="Mapua P."/>
            <person name="Martindale A.D."/>
            <person name="Martinez E."/>
            <person name="Massey E."/>
            <person name="Mawhiney S."/>
            <person name="Meador M.G."/>
            <person name="Mendez S."/>
            <person name="Mercado C."/>
            <person name="Mercado I.C."/>
            <person name="Merritt C.E."/>
            <person name="Miner Z.L."/>
            <person name="Minja E."/>
            <person name="Mitchell T."/>
            <person name="Mohabbat F."/>
            <person name="Mohabbat K."/>
            <person name="Montgomery B."/>
            <person name="Moore N."/>
            <person name="Morris S."/>
            <person name="Munidasa M."/>
            <person name="Ngo R.N."/>
            <person name="Nguyen N.B."/>
            <person name="Nickerson E."/>
            <person name="Nwaokelemeh O.O."/>
            <person name="Nwokenkwo S."/>
            <person name="Obregon M."/>
            <person name="Oguh M."/>
            <person name="Oragunye N."/>
            <person name="Oviedo R.J."/>
            <person name="Parish B.J."/>
            <person name="Parker D.N."/>
            <person name="Parrish J."/>
            <person name="Parks K.L."/>
            <person name="Paul H.A."/>
            <person name="Payton B.A."/>
            <person name="Perez A."/>
            <person name="Perrin W."/>
            <person name="Pickens A."/>
            <person name="Primus E.L."/>
            <person name="Pu L.-L."/>
            <person name="Puazo M."/>
            <person name="Quiles M.M."/>
            <person name="Quiroz J.B."/>
            <person name="Rabata D."/>
            <person name="Reeves K."/>
            <person name="Ruiz S.J."/>
            <person name="Shao H."/>
            <person name="Sisson I."/>
            <person name="Sonaike T."/>
            <person name="Sorelle R.P."/>
            <person name="Sutton A.E."/>
            <person name="Svatek A.F."/>
            <person name="Svetz L.A."/>
            <person name="Tamerisa K.S."/>
            <person name="Taylor T.R."/>
            <person name="Teague B."/>
            <person name="Thomas N."/>
            <person name="Thorn R.D."/>
            <person name="Trejos Z.Y."/>
            <person name="Trevino B.K."/>
            <person name="Ukegbu O.N."/>
            <person name="Urban J.B."/>
            <person name="Vasquez L.I."/>
            <person name="Vera V.A."/>
            <person name="Villasana D.M."/>
            <person name="Wang L."/>
            <person name="Ward-Moore S."/>
            <person name="Warren J.T."/>
            <person name="Wei X."/>
            <person name="White F."/>
            <person name="Williamson A.L."/>
            <person name="Wleczyk R."/>
            <person name="Wooden H.S."/>
            <person name="Wooden S.H."/>
            <person name="Yen J."/>
            <person name="Yoon L."/>
            <person name="Yoon V."/>
            <person name="Zorrilla S.E."/>
            <person name="Nelson D."/>
            <person name="Kucherlapati R."/>
            <person name="Weinstock G."/>
            <person name="Gibbs R.A."/>
        </authorList>
    </citation>
    <scope>NUCLEOTIDE SEQUENCE [LARGE SCALE GENOMIC DNA]</scope>
</reference>
<reference key="5">
    <citation type="journal article" date="2004" name="Genome Res.">
        <title>The status, quality, and expansion of the NIH full-length cDNA project: the Mammalian Gene Collection (MGC).</title>
        <authorList>
            <consortium name="The MGC Project Team"/>
        </authorList>
    </citation>
    <scope>NUCLEOTIDE SEQUENCE [LARGE SCALE MRNA] (ISOFORM 5)</scope>
</reference>
<reference key="6">
    <citation type="journal article" date="1996" name="Nat. Genet.">
        <title>Cloning of the gene for spinocerebellar ataxia 2 reveals a locus with high sensitivity to expanded CAG/glutamine repeats.</title>
        <authorList>
            <person name="Imbert G."/>
            <person name="Saudou F."/>
            <person name="Yvert G."/>
            <person name="Devys D."/>
            <person name="Trottier Y."/>
            <person name="Garnier J.-M."/>
            <person name="Weber C."/>
            <person name="Mandel J.-L."/>
            <person name="Cancel G."/>
            <person name="Abbas N."/>
            <person name="Duerr A."/>
            <person name="Didierjean O."/>
            <person name="Stevanin G."/>
            <person name="Agid Y."/>
            <person name="Brice A."/>
        </authorList>
    </citation>
    <scope>NUCLEOTIDE SEQUENCE [MRNA] OF 81-1313 (ISOFORM 2)</scope>
    <scope>POLYMORPHISM</scope>
    <scope>INVOLVEMENT IN SCA2</scope>
    <scope>TISSUE SPECIFICITY</scope>
    <scope>VARIANT VAL-107</scope>
</reference>
<reference key="7">
    <citation type="journal article" date="1998" name="Genomics">
        <title>Genomic structure of the human gene for spinocerebellar ataxia type 2 (SCA2) on chromosome 12q24.1.</title>
        <authorList>
            <person name="Sahba S."/>
            <person name="Nechiporuk A."/>
            <person name="Figueroa K.P."/>
            <person name="Nechiporuk T."/>
            <person name="Pulst S.-M."/>
        </authorList>
    </citation>
    <scope>ALTERNATIVE SPLICING</scope>
    <scope>TISSUE SPECIFICITY</scope>
</reference>
<reference key="8">
    <citation type="journal article" date="2000" name="Hum. Mol. Genet.">
        <title>A novel protein with RNA-binding motifs interacts with ataxin-2.</title>
        <authorList>
            <person name="Shibata H."/>
            <person name="Huynh D.P."/>
            <person name="Pulst S.-M."/>
        </authorList>
    </citation>
    <scope>INTERACTION WITH RBFOX1</scope>
</reference>
<reference key="9">
    <citation type="journal article" date="2006" name="Hum. Mol. Genet.">
        <title>Ataxin-2 and its Drosophila homolog, ATX2, physically assemble with polyribosomes.</title>
        <authorList>
            <person name="Satterfield T.F."/>
            <person name="Pallanck L.J."/>
        </authorList>
    </citation>
    <scope>INTERACTION WITH POLYRIBOSOMES</scope>
</reference>
<reference key="10">
    <citation type="journal article" date="2006" name="Nat. Biotechnol.">
        <title>A probability-based approach for high-throughput protein phosphorylation analysis and site localization.</title>
        <authorList>
            <person name="Beausoleil S.A."/>
            <person name="Villen J."/>
            <person name="Gerber S.A."/>
            <person name="Rush J."/>
            <person name="Gygi S.P."/>
        </authorList>
    </citation>
    <scope>IDENTIFICATION BY MASS SPECTROMETRY [LARGE SCALE ANALYSIS]</scope>
    <source>
        <tissue>Cervix carcinoma</tissue>
    </source>
</reference>
<reference key="11">
    <citation type="journal article" date="2008" name="Cell. Signal.">
        <title>Ataxin-2 associates with the endocytosis complex and affects EGF receptor trafficking.</title>
        <authorList>
            <person name="Nonis D."/>
            <person name="Schmidt M.H."/>
            <person name="van de Loo S."/>
            <person name="Eich F."/>
            <person name="Dikic I."/>
            <person name="Nowock J."/>
            <person name="Auburger G."/>
        </authorList>
    </citation>
    <scope>FUNCTION</scope>
    <scope>INTERACTION WITH EGFR; SH3GL2 AND SH3GL3</scope>
</reference>
<reference key="12">
    <citation type="journal article" date="2008" name="J. Proteome Res.">
        <title>Combining protein-based IMAC, peptide-based IMAC, and MudPIT for efficient phosphoproteomic analysis.</title>
        <authorList>
            <person name="Cantin G.T."/>
            <person name="Yi W."/>
            <person name="Lu B."/>
            <person name="Park S.K."/>
            <person name="Xu T."/>
            <person name="Lee J.-D."/>
            <person name="Yates J.R. III"/>
        </authorList>
    </citation>
    <scope>PHOSPHORYLATION [LARGE SCALE ANALYSIS] AT SER-784</scope>
    <scope>IDENTIFICATION BY MASS SPECTROMETRY [LARGE SCALE ANALYSIS]</scope>
    <source>
        <tissue>Cervix carcinoma</tissue>
    </source>
</reference>
<reference key="13">
    <citation type="journal article" date="2008" name="Proc. Natl. Acad. Sci. U.S.A.">
        <title>A quantitative atlas of mitotic phosphorylation.</title>
        <authorList>
            <person name="Dephoure N."/>
            <person name="Zhou C."/>
            <person name="Villen J."/>
            <person name="Beausoleil S.A."/>
            <person name="Bakalarski C.E."/>
            <person name="Elledge S.J."/>
            <person name="Gygi S.P."/>
        </authorList>
    </citation>
    <scope>PHOSPHORYLATION [LARGE SCALE ANALYSIS] AT SER-466; SER-554; SER-684; THR-741; SER-857; SER-861; SER-888 AND SER-889</scope>
    <scope>IDENTIFICATION BY MASS SPECTROMETRY [LARGE SCALE ANALYSIS]</scope>
    <source>
        <tissue>Cervix carcinoma</tissue>
    </source>
</reference>
<reference key="14">
    <citation type="journal article" date="2009" name="Anal. Chem.">
        <title>Lys-N and trypsin cover complementary parts of the phosphoproteome in a refined SCX-based approach.</title>
        <authorList>
            <person name="Gauci S."/>
            <person name="Helbig A.O."/>
            <person name="Slijper M."/>
            <person name="Krijgsveld J."/>
            <person name="Heck A.J."/>
            <person name="Mohammed S."/>
        </authorList>
    </citation>
    <scope>IDENTIFICATION BY MASS SPECTROMETRY [LARGE SCALE ANALYSIS]</scope>
</reference>
<reference key="15">
    <citation type="journal article" date="2009" name="Sci. Signal.">
        <title>Quantitative phosphoproteomic analysis of T cell receptor signaling reveals system-wide modulation of protein-protein interactions.</title>
        <authorList>
            <person name="Mayya V."/>
            <person name="Lundgren D.H."/>
            <person name="Hwang S.-I."/>
            <person name="Rezaul K."/>
            <person name="Wu L."/>
            <person name="Eng J.K."/>
            <person name="Rodionov V."/>
            <person name="Han D.K."/>
        </authorList>
    </citation>
    <scope>PHOSPHORYLATION [LARGE SCALE ANALYSIS] AT SER-684</scope>
    <scope>IDENTIFICATION BY MASS SPECTROMETRY [LARGE SCALE ANALYSIS]</scope>
    <source>
        <tissue>Leukemic T-cell</tissue>
    </source>
</reference>
<reference key="16">
    <citation type="journal article" date="2010" name="Nature">
        <title>Ataxin-2 intermediate-length polyglutamine expansions are associated with increased risk for ALS.</title>
        <authorList>
            <person name="Elden A.C."/>
            <person name="Kim H.J."/>
            <person name="Hart M.P."/>
            <person name="Chen-Plotkin A.S."/>
            <person name="Johnson B.S."/>
            <person name="Fang X."/>
            <person name="Armakola M."/>
            <person name="Geser F."/>
            <person name="Greene R."/>
            <person name="Lu M.M."/>
            <person name="Padmanabhan A."/>
            <person name="Clay-Falcone D."/>
            <person name="McCluskey L."/>
            <person name="Elman L."/>
            <person name="Juhr D."/>
            <person name="Gruber P.J."/>
            <person name="Rub U."/>
            <person name="Auburger G."/>
            <person name="Trojanowski J.Q."/>
            <person name="Lee V.M."/>
            <person name="Van Deerlin V.M."/>
            <person name="Bonini N.M."/>
            <person name="Gitler A.D."/>
        </authorList>
    </citation>
    <scope>INTERACTION WITH TARDBP</scope>
    <scope>INVOLVEMENT IN ALS13</scope>
    <scope>POLY-GLN REPEAT EXPANSION</scope>
</reference>
<reference key="17">
    <citation type="journal article" date="2010" name="Sci. Signal.">
        <title>Quantitative phosphoproteomics reveals widespread full phosphorylation site occupancy during mitosis.</title>
        <authorList>
            <person name="Olsen J.V."/>
            <person name="Vermeulen M."/>
            <person name="Santamaria A."/>
            <person name="Kumar C."/>
            <person name="Miller M.L."/>
            <person name="Jensen L.J."/>
            <person name="Gnad F."/>
            <person name="Cox J."/>
            <person name="Jensen T.S."/>
            <person name="Nigg E.A."/>
            <person name="Brunak S."/>
            <person name="Mann M."/>
        </authorList>
    </citation>
    <scope>PHOSPHORYLATION [LARGE SCALE ANALYSIS] AT SER-393; SER-684 AND SER-784</scope>
    <scope>IDENTIFICATION BY MASS SPECTROMETRY [LARGE SCALE ANALYSIS]</scope>
    <source>
        <tissue>Cervix carcinoma</tissue>
    </source>
</reference>
<reference key="18">
    <citation type="journal article" date="2011" name="BMC Syst. Biol.">
        <title>Initial characterization of the human central proteome.</title>
        <authorList>
            <person name="Burkard T.R."/>
            <person name="Planyavsky M."/>
            <person name="Kaupe I."/>
            <person name="Breitwieser F.P."/>
            <person name="Buerckstuemmer T."/>
            <person name="Bennett K.L."/>
            <person name="Superti-Furga G."/>
            <person name="Colinge J."/>
        </authorList>
    </citation>
    <scope>IDENTIFICATION BY MASS SPECTROMETRY [LARGE SCALE ANALYSIS]</scope>
</reference>
<reference key="19">
    <citation type="journal article" date="2011" name="Sci. Signal.">
        <title>System-wide temporal characterization of the proteome and phosphoproteome of human embryonic stem cell differentiation.</title>
        <authorList>
            <person name="Rigbolt K.T."/>
            <person name="Prokhorova T.A."/>
            <person name="Akimov V."/>
            <person name="Henningsen J."/>
            <person name="Johansen P.T."/>
            <person name="Kratchmarova I."/>
            <person name="Kassem M."/>
            <person name="Mann M."/>
            <person name="Olsen J.V."/>
            <person name="Blagoev B."/>
        </authorList>
    </citation>
    <scope>PHOSPHORYLATION [LARGE SCALE ANALYSIS] AT SER-784; SER-861 AND SER-865</scope>
    <scope>IDENTIFICATION BY MASS SPECTROMETRY [LARGE SCALE ANALYSIS]</scope>
</reference>
<reference key="20">
    <citation type="journal article" date="2012" name="PLoS ONE">
        <title>Ataxin-2-like is a regulator of stress granules and processing bodies.</title>
        <authorList>
            <person name="Kaehler C."/>
            <person name="Isensee J."/>
            <person name="Nonhoff U."/>
            <person name="Terrey M."/>
            <person name="Hucho T."/>
            <person name="Lehrach H."/>
            <person name="Krobitsch S."/>
        </authorList>
    </citation>
    <scope>INTERACTION WITH ATXN2L</scope>
</reference>
<reference key="21">
    <citation type="journal article" date="2013" name="J. Proteome Res.">
        <title>Toward a comprehensive characterization of a human cancer cell phosphoproteome.</title>
        <authorList>
            <person name="Zhou H."/>
            <person name="Di Palma S."/>
            <person name="Preisinger C."/>
            <person name="Peng M."/>
            <person name="Polat A.N."/>
            <person name="Heck A.J."/>
            <person name="Mohammed S."/>
        </authorList>
    </citation>
    <scope>PHOSPHORYLATION [LARGE SCALE ANALYSIS] AT SER-466; SER-478; SER-508; SER-624; SER-642; SER-684; SER-772; SER-784 AND SER-889</scope>
    <scope>IDENTIFICATION BY MASS SPECTROMETRY [LARGE SCALE ANALYSIS]</scope>
    <source>
        <tissue>Cervix carcinoma</tissue>
        <tissue>Erythroleukemia</tissue>
    </source>
</reference>
<reference key="22">
    <citation type="journal article" date="2014" name="J. Proteomics">
        <title>An enzyme assisted RP-RPLC approach for in-depth analysis of human liver phosphoproteome.</title>
        <authorList>
            <person name="Bian Y."/>
            <person name="Song C."/>
            <person name="Cheng K."/>
            <person name="Dong M."/>
            <person name="Wang F."/>
            <person name="Huang J."/>
            <person name="Sun D."/>
            <person name="Wang L."/>
            <person name="Ye M."/>
            <person name="Zou H."/>
        </authorList>
    </citation>
    <scope>PHOSPHORYLATION [LARGE SCALE ANALYSIS] AT SER-624 AND SER-728</scope>
    <scope>IDENTIFICATION BY MASS SPECTROMETRY [LARGE SCALE ANALYSIS]</scope>
    <source>
        <tissue>Liver</tissue>
    </source>
</reference>
<reference key="23">
    <citation type="journal article" date="2014" name="Mol. Cell. Proteomics">
        <title>Immunoaffinity enrichment and mass spectrometry analysis of protein methylation.</title>
        <authorList>
            <person name="Guo A."/>
            <person name="Gu H."/>
            <person name="Zhou J."/>
            <person name="Mulhern D."/>
            <person name="Wang Y."/>
            <person name="Lee K.A."/>
            <person name="Yang V."/>
            <person name="Aguiar M."/>
            <person name="Kornhauser J."/>
            <person name="Jia X."/>
            <person name="Ren J."/>
            <person name="Beausoleil S.A."/>
            <person name="Silva J.C."/>
            <person name="Vemulapalli V."/>
            <person name="Bedford M.T."/>
            <person name="Comb M.J."/>
        </authorList>
    </citation>
    <scope>METHYLATION [LARGE SCALE ANALYSIS] AT ARG-640</scope>
    <scope>IDENTIFICATION BY MASS SPECTROMETRY [LARGE SCALE ANALYSIS]</scope>
    <source>
        <tissue>Colon carcinoma</tissue>
    </source>
</reference>
<reference key="24">
    <citation type="journal article" date="2017" name="Nat. Struct. Mol. Biol.">
        <title>Site-specific mapping of the human SUMO proteome reveals co-modification with phosphorylation.</title>
        <authorList>
            <person name="Hendriks I.A."/>
            <person name="Lyon D."/>
            <person name="Young C."/>
            <person name="Jensen L.J."/>
            <person name="Vertegaal A.C."/>
            <person name="Nielsen M.L."/>
        </authorList>
    </citation>
    <scope>SUMOYLATION [LARGE SCALE ANALYSIS] AT LYS-893</scope>
    <scope>IDENTIFICATION BY MASS SPECTROMETRY [LARGE SCALE ANALYSIS]</scope>
</reference>
<organism>
    <name type="scientific">Homo sapiens</name>
    <name type="common">Human</name>
    <dbReference type="NCBI Taxonomy" id="9606"/>
    <lineage>
        <taxon>Eukaryota</taxon>
        <taxon>Metazoa</taxon>
        <taxon>Chordata</taxon>
        <taxon>Craniata</taxon>
        <taxon>Vertebrata</taxon>
        <taxon>Euteleostomi</taxon>
        <taxon>Mammalia</taxon>
        <taxon>Eutheria</taxon>
        <taxon>Euarchontoglires</taxon>
        <taxon>Primates</taxon>
        <taxon>Haplorrhini</taxon>
        <taxon>Catarrhini</taxon>
        <taxon>Hominidae</taxon>
        <taxon>Homo</taxon>
    </lineage>
</organism>
<gene>
    <name type="primary">ATXN2</name>
    <name type="synonym">ATX2</name>
    <name type="synonym">SCA2</name>
    <name type="synonym">TNRC13</name>
</gene>
<proteinExistence type="evidence at protein level"/>